<keyword id="KW-0408">Iron</keyword>
<keyword id="KW-0456">Lyase</keyword>
<keyword id="KW-0479">Metal-binding</keyword>
<keyword id="KW-0558">Oxidation</keyword>
<reference key="1">
    <citation type="journal article" date="1991" name="J. Bacteriol.">
        <title>Purification, cloning, and primary structure of a new enantiomer-selective amidase from a Rhodococcus strain: structural evidence for a conserved genetic coupling with nitrile hydratase.</title>
        <authorList>
            <person name="Mayaux J.-F."/>
            <person name="Cerbelaud E."/>
            <person name="Soubrier F."/>
            <person name="Yeh P."/>
            <person name="Blanche F."/>
            <person name="Petre D."/>
        </authorList>
    </citation>
    <scope>NUCLEOTIDE SEQUENCE [GENOMIC DNA]</scope>
</reference>
<accession>Q53118</accession>
<protein>
    <recommendedName>
        <fullName>Nitrile hydratase subunit alpha</fullName>
        <shortName>NHase</shortName>
        <shortName>Nitrilase</shortName>
        <ecNumber>4.2.1.84</ecNumber>
    </recommendedName>
</protein>
<proteinExistence type="inferred from homology"/>
<sequence>MNNIIPTQEEIAARVKALESILIEQNVISTAMVDRMVEIYEEEVGPKLGAKVVAKAWTDSEFKARLLDDATEACKELGISGLQGEDMVVLEDTDDVHHAIVCTLCSCYPWPVLGLPPNWYKEPAYRARIVREPRTVLSEEFNYHLPESTEIRIWDTSSEMRYWVLPQRPEGTEGWSEEQLAELVTRDSMIGVGPVKTPA</sequence>
<name>NHAA_RHOSO</name>
<organism>
    <name type="scientific">Rhodococcus sp</name>
    <dbReference type="NCBI Taxonomy" id="1831"/>
    <lineage>
        <taxon>Bacteria</taxon>
        <taxon>Bacillati</taxon>
        <taxon>Actinomycetota</taxon>
        <taxon>Actinomycetes</taxon>
        <taxon>Mycobacteriales</taxon>
        <taxon>Nocardiaceae</taxon>
        <taxon>Rhodococcus</taxon>
    </lineage>
</organism>
<comment type="function">
    <text>NHase catalyzes the hydration of various nitrile compounds to the corresponding amides. Industrial production of acrylamide is now being developed using some of the enzymes of this class.</text>
</comment>
<comment type="catalytic activity">
    <reaction>
        <text>an aliphatic primary amide = an aliphatic nitrile + H2O</text>
        <dbReference type="Rhea" id="RHEA:12673"/>
        <dbReference type="ChEBI" id="CHEBI:15377"/>
        <dbReference type="ChEBI" id="CHEBI:65285"/>
        <dbReference type="ChEBI" id="CHEBI:80291"/>
        <dbReference type="EC" id="4.2.1.84"/>
    </reaction>
</comment>
<comment type="cofactor">
    <cofactor>
        <name>Fe(3+)</name>
        <dbReference type="ChEBI" id="CHEBI:29034"/>
    </cofactor>
    <text>Binds 1 Fe(3+) ion per subunit.</text>
</comment>
<comment type="activity regulation">
    <text>Inactivated by oxidation of Cys-107 to a sulfenic acid.</text>
</comment>
<comment type="subunit">
    <text>Heterodimer of an alpha and a beta chain.</text>
</comment>
<comment type="PTM">
    <text evidence="1">Oxidation on Cys-105 is essential for the activity.</text>
</comment>
<comment type="PTM">
    <text evidence="1">Oxidation on Cys-107 stabilizes the Fe-NO ligand coordinated in the inactive form.</text>
</comment>
<comment type="similarity">
    <text evidence="2">Belongs to the nitrile hydratase subunit alpha family.</text>
</comment>
<gene>
    <name type="primary">nthA</name>
</gene>
<dbReference type="EC" id="4.2.1.84"/>
<dbReference type="EMBL" id="M74531">
    <property type="protein sequence ID" value="AAA26185.1"/>
    <property type="molecule type" value="Genomic_DNA"/>
</dbReference>
<dbReference type="PIR" id="C41326">
    <property type="entry name" value="C41326"/>
</dbReference>
<dbReference type="SMR" id="Q53118"/>
<dbReference type="GO" id="GO:0018822">
    <property type="term" value="F:nitrile hydratase activity"/>
    <property type="evidence" value="ECO:0007669"/>
    <property type="project" value="UniProtKB-EC"/>
</dbReference>
<dbReference type="GO" id="GO:0046914">
    <property type="term" value="F:transition metal ion binding"/>
    <property type="evidence" value="ECO:0007669"/>
    <property type="project" value="InterPro"/>
</dbReference>
<dbReference type="Gene3D" id="3.90.330.10">
    <property type="entry name" value="Nitrile hydratase alpha /Thiocyanate hydrolase gamma"/>
    <property type="match status" value="1"/>
</dbReference>
<dbReference type="InterPro" id="IPR036648">
    <property type="entry name" value="CN_Hdrase_a/SCN_Hdrase_g_sf"/>
</dbReference>
<dbReference type="InterPro" id="IPR004232">
    <property type="entry name" value="CN_Hdrtase_a/SCN_Hdrlase_g"/>
</dbReference>
<dbReference type="InterPro" id="IPR023900">
    <property type="entry name" value="CN_Hdrtase_asu/SCN_Hdrlase_gsu"/>
</dbReference>
<dbReference type="InterPro" id="IPR018141">
    <property type="entry name" value="Nitrile_hydratase_asu"/>
</dbReference>
<dbReference type="NCBIfam" id="TIGR01323">
    <property type="entry name" value="nitrile_alph"/>
    <property type="match status" value="1"/>
</dbReference>
<dbReference type="Pfam" id="PF02979">
    <property type="entry name" value="NHase_alpha"/>
    <property type="match status" value="1"/>
</dbReference>
<dbReference type="PIRSF" id="PIRSF001426">
    <property type="entry name" value="NHase_alpha"/>
    <property type="match status" value="1"/>
</dbReference>
<dbReference type="SUPFAM" id="SSF56209">
    <property type="entry name" value="Nitrile hydratase alpha chain"/>
    <property type="match status" value="1"/>
</dbReference>
<feature type="chain" id="PRO_0000186826" description="Nitrile hydratase subunit alpha">
    <location>
        <begin position="1"/>
        <end position="199"/>
    </location>
</feature>
<feature type="binding site" evidence="1">
    <location>
        <position position="102"/>
    </location>
    <ligand>
        <name>Fe(3+)</name>
        <dbReference type="ChEBI" id="CHEBI:29034"/>
    </ligand>
</feature>
<feature type="binding site" evidence="1">
    <location>
        <position position="105"/>
    </location>
    <ligand>
        <name>Fe(3+)</name>
        <dbReference type="ChEBI" id="CHEBI:29034"/>
    </ligand>
</feature>
<feature type="binding site" evidence="1">
    <location>
        <position position="106"/>
    </location>
    <ligand>
        <name>Fe(3+)</name>
        <dbReference type="ChEBI" id="CHEBI:29034"/>
    </ligand>
</feature>
<feature type="binding site" evidence="1">
    <location>
        <position position="107"/>
    </location>
    <ligand>
        <name>Fe(3+)</name>
        <dbReference type="ChEBI" id="CHEBI:29034"/>
    </ligand>
</feature>
<feature type="modified residue" description="Cysteine sulfinic acid (-SO2H)" evidence="1">
    <location>
        <position position="105"/>
    </location>
</feature>
<feature type="modified residue" description="Cysteine sulfenic acid (-SOH)" evidence="1">
    <location>
        <position position="107"/>
    </location>
</feature>
<evidence type="ECO:0000250" key="1"/>
<evidence type="ECO:0000305" key="2"/>